<name>C562_CERS4</name>
<feature type="initiator methionine" description="Removed" evidence="3">
    <location>
        <position position="1"/>
    </location>
</feature>
<feature type="chain" id="PRO_0000199976" description="Cytochrome b562">
    <location>
        <begin position="2"/>
        <end position="158"/>
    </location>
</feature>
<feature type="transmembrane region" description="Helical" evidence="2">
    <location>
        <begin position="12"/>
        <end position="32"/>
    </location>
</feature>
<feature type="transmembrane region" description="Helical" evidence="2">
    <location>
        <begin position="46"/>
        <end position="66"/>
    </location>
</feature>
<feature type="transmembrane region" description="Helical" evidence="2">
    <location>
        <begin position="87"/>
        <end position="107"/>
    </location>
</feature>
<feature type="transmembrane region" description="Helical" evidence="2">
    <location>
        <begin position="121"/>
        <end position="141"/>
    </location>
</feature>
<feature type="binding site" description="axial binding residue" evidence="1">
    <location>
        <position position="15"/>
    </location>
    <ligand>
        <name>heme b</name>
        <dbReference type="ChEBI" id="CHEBI:60344"/>
        <label>1</label>
    </ligand>
    <ligandPart>
        <name>Fe</name>
        <dbReference type="ChEBI" id="CHEBI:18248"/>
    </ligandPart>
</feature>
<feature type="binding site" description="axial binding residue" evidence="1">
    <location>
        <position position="53"/>
    </location>
    <ligand>
        <name>heme b</name>
        <dbReference type="ChEBI" id="CHEBI:60344"/>
        <label>2</label>
    </ligand>
    <ligandPart>
        <name>Fe</name>
        <dbReference type="ChEBI" id="CHEBI:18248"/>
    </ligandPart>
</feature>
<feature type="binding site" description="axial binding residue" evidence="1">
    <location>
        <position position="121"/>
    </location>
    <ligand>
        <name>heme b</name>
        <dbReference type="ChEBI" id="CHEBI:60344"/>
        <label>2</label>
    </ligand>
    <ligandPart>
        <name>Fe</name>
        <dbReference type="ChEBI" id="CHEBI:18248"/>
    </ligandPart>
</feature>
<feature type="binding site" description="axial binding residue" evidence="1">
    <location>
        <position position="135"/>
    </location>
    <ligand>
        <name>heme b</name>
        <dbReference type="ChEBI" id="CHEBI:60344"/>
        <label>1</label>
    </ligand>
    <ligandPart>
        <name>Fe</name>
        <dbReference type="ChEBI" id="CHEBI:18248"/>
    </ligandPart>
</feature>
<keyword id="KW-1003">Cell membrane</keyword>
<keyword id="KW-0903">Direct protein sequencing</keyword>
<keyword id="KW-0249">Electron transport</keyword>
<keyword id="KW-0349">Heme</keyword>
<keyword id="KW-0408">Iron</keyword>
<keyword id="KW-0472">Membrane</keyword>
<keyword id="KW-0479">Metal-binding</keyword>
<keyword id="KW-1185">Reference proteome</keyword>
<keyword id="KW-0812">Transmembrane</keyword>
<keyword id="KW-1133">Transmembrane helix</keyword>
<keyword id="KW-0813">Transport</keyword>
<protein>
    <recommendedName>
        <fullName>Cytochrome b562</fullName>
    </recommendedName>
    <alternativeName>
        <fullName evidence="4">Cytochrome b-562</fullName>
    </alternativeName>
</protein>
<dbReference type="EMBL" id="D00235">
    <property type="protein sequence ID" value="BAA00164.1"/>
    <property type="molecule type" value="Genomic_DNA"/>
</dbReference>
<dbReference type="EMBL" id="CP000143">
    <property type="protein sequence ID" value="ABA77717.1"/>
    <property type="molecule type" value="Genomic_DNA"/>
</dbReference>
<dbReference type="PIR" id="A41430">
    <property type="entry name" value="A41430"/>
</dbReference>
<dbReference type="RefSeq" id="WP_011336847.1">
    <property type="nucleotide sequence ID" value="NC_007493.2"/>
</dbReference>
<dbReference type="RefSeq" id="YP_351618.1">
    <property type="nucleotide sequence ID" value="NC_007493.2"/>
</dbReference>
<dbReference type="SMR" id="P16670"/>
<dbReference type="STRING" id="272943.RSP_1574"/>
<dbReference type="EnsemblBacteria" id="ABA77717">
    <property type="protein sequence ID" value="ABA77717"/>
    <property type="gene ID" value="RSP_1574"/>
</dbReference>
<dbReference type="GeneID" id="3718602"/>
<dbReference type="KEGG" id="rsp:RSP_1574"/>
<dbReference type="PATRIC" id="fig|272943.9.peg.451"/>
<dbReference type="eggNOG" id="COG3038">
    <property type="taxonomic scope" value="Bacteria"/>
</dbReference>
<dbReference type="OrthoDB" id="8156287at2"/>
<dbReference type="Proteomes" id="UP000002703">
    <property type="component" value="Chromosome 1"/>
</dbReference>
<dbReference type="GO" id="GO:0005886">
    <property type="term" value="C:plasma membrane"/>
    <property type="evidence" value="ECO:0007669"/>
    <property type="project" value="UniProtKB-SubCell"/>
</dbReference>
<dbReference type="GO" id="GO:0009055">
    <property type="term" value="F:electron transfer activity"/>
    <property type="evidence" value="ECO:0007669"/>
    <property type="project" value="InterPro"/>
</dbReference>
<dbReference type="GO" id="GO:0020037">
    <property type="term" value="F:heme binding"/>
    <property type="evidence" value="ECO:0007669"/>
    <property type="project" value="TreeGrafter"/>
</dbReference>
<dbReference type="GO" id="GO:0046872">
    <property type="term" value="F:metal ion binding"/>
    <property type="evidence" value="ECO:0007669"/>
    <property type="project" value="UniProtKB-KW"/>
</dbReference>
<dbReference type="GO" id="GO:0022904">
    <property type="term" value="P:respiratory electron transport chain"/>
    <property type="evidence" value="ECO:0007669"/>
    <property type="project" value="InterPro"/>
</dbReference>
<dbReference type="InterPro" id="IPR011577">
    <property type="entry name" value="Cyt_b561_bac/Ni-Hgenase"/>
</dbReference>
<dbReference type="InterPro" id="IPR052168">
    <property type="entry name" value="Cytochrome_b561_oxidase"/>
</dbReference>
<dbReference type="InterPro" id="IPR016174">
    <property type="entry name" value="Di-haem_cyt_TM"/>
</dbReference>
<dbReference type="PANTHER" id="PTHR30529">
    <property type="entry name" value="CYTOCHROME B561"/>
    <property type="match status" value="1"/>
</dbReference>
<dbReference type="PANTHER" id="PTHR30529:SF1">
    <property type="entry name" value="CYTOCHROME B561 HOMOLOG 2"/>
    <property type="match status" value="1"/>
</dbReference>
<dbReference type="Pfam" id="PF01292">
    <property type="entry name" value="Ni_hydr_CYTB"/>
    <property type="match status" value="1"/>
</dbReference>
<dbReference type="SUPFAM" id="SSF81342">
    <property type="entry name" value="Transmembrane di-heme cytochromes"/>
    <property type="match status" value="1"/>
</dbReference>
<accession>P16670</accession>
<accession>Q3J667</accession>
<reference key="1">
    <citation type="journal article" date="1987" name="J. Biochem.">
        <title>Structural gene of cytochrome b-562 from the cytochrome b-c1 complex of Rhodobacter sphaeroides.</title>
        <authorList>
            <person name="Iba K."/>
            <person name="Morohashi K."/>
            <person name="Miyata T."/>
            <person name="Takamiya K."/>
        </authorList>
    </citation>
    <scope>NUCLEOTIDE SEQUENCE [GENOMIC DNA]</scope>
    <scope>PROTEIN SEQUENCE OF 2-31</scope>
</reference>
<reference key="2">
    <citation type="submission" date="2005-09" db="EMBL/GenBank/DDBJ databases">
        <title>Complete sequence of chromosome 1 of Rhodobacter sphaeroides 2.4.1.</title>
        <authorList>
            <person name="Copeland A."/>
            <person name="Lucas S."/>
            <person name="Lapidus A."/>
            <person name="Barry K."/>
            <person name="Detter J.C."/>
            <person name="Glavina T."/>
            <person name="Hammon N."/>
            <person name="Israni S."/>
            <person name="Pitluck S."/>
            <person name="Richardson P."/>
            <person name="Mackenzie C."/>
            <person name="Choudhary M."/>
            <person name="Larimer F."/>
            <person name="Hauser L.J."/>
            <person name="Land M."/>
            <person name="Donohue T.J."/>
            <person name="Kaplan S."/>
        </authorList>
    </citation>
    <scope>NUCLEOTIDE SEQUENCE [LARGE SCALE GENOMIC DNA]</scope>
    <source>
        <strain>ATCC 17023 / DSM 158 / JCM 6121 / CCUG 31486 / LMG 2827 / NBRC 12203 / NCIMB 8253 / ATH 2.4.1.</strain>
    </source>
</reference>
<proteinExistence type="evidence at protein level"/>
<sequence length="158" mass="17120">MTQEPGYTRLQITLHWAIAGLVLFNYIFGETMERAYDAVRQNVEPAGVGHYLHVVVGLAVLVLTLVRIGARFVLGVPEKGTTPGDKVAAGLQGLLYLLTLLVPALGMTAWGGGQAWAAGPHVLAANAIMLLALVHAVSALFHQYVLKDRLLLRMMRPR</sequence>
<organism>
    <name type="scientific">Cereibacter sphaeroides (strain ATCC 17023 / DSM 158 / JCM 6121 / CCUG 31486 / LMG 2827 / NBRC 12203 / NCIMB 8253 / ATH 2.4.1.)</name>
    <name type="common">Rhodobacter sphaeroides</name>
    <dbReference type="NCBI Taxonomy" id="272943"/>
    <lineage>
        <taxon>Bacteria</taxon>
        <taxon>Pseudomonadati</taxon>
        <taxon>Pseudomonadota</taxon>
        <taxon>Alphaproteobacteria</taxon>
        <taxon>Rhodobacterales</taxon>
        <taxon>Paracoccaceae</taxon>
        <taxon>Cereibacter</taxon>
    </lineage>
</organism>
<comment type="function">
    <text>Cytochrome b562 is an integral component of the cytochrome b-c1 complex in the cyclic electron transfer system of photosynthetic bacteria.</text>
</comment>
<comment type="cofactor">
    <cofactor evidence="1">
        <name>heme b</name>
        <dbReference type="ChEBI" id="CHEBI:60344"/>
    </cofactor>
    <text evidence="1">Binds 2 heme b (iron-protoporphyrin IX) groups per molecule.</text>
</comment>
<comment type="subunit">
    <text>Homodimer.</text>
</comment>
<comment type="subcellular location">
    <subcellularLocation>
        <location evidence="5">Cell membrane</location>
        <topology evidence="2">Multi-pass membrane protein</topology>
    </subcellularLocation>
</comment>
<comment type="similarity">
    <text evidence="5">Belongs to the cytochrome b561 family.</text>
</comment>
<evidence type="ECO:0000250" key="1">
    <source>
        <dbReference type="UniProtKB" id="P0ABE5"/>
    </source>
</evidence>
<evidence type="ECO:0000255" key="2"/>
<evidence type="ECO:0000269" key="3">
    <source>
    </source>
</evidence>
<evidence type="ECO:0000303" key="4">
    <source>
    </source>
</evidence>
<evidence type="ECO:0000305" key="5"/>
<gene>
    <name type="ordered locus">RHOS4_01490</name>
    <name type="ORF">RSP_1574</name>
</gene>